<gene>
    <name type="primary">MT-CYB</name>
    <name type="synonym">COB</name>
    <name type="synonym">CYTB</name>
    <name type="synonym">MTCYB</name>
</gene>
<accession>Q957C6</accession>
<keyword id="KW-0249">Electron transport</keyword>
<keyword id="KW-0349">Heme</keyword>
<keyword id="KW-0408">Iron</keyword>
<keyword id="KW-0472">Membrane</keyword>
<keyword id="KW-0479">Metal-binding</keyword>
<keyword id="KW-0496">Mitochondrion</keyword>
<keyword id="KW-0999">Mitochondrion inner membrane</keyword>
<keyword id="KW-0679">Respiratory chain</keyword>
<keyword id="KW-0812">Transmembrane</keyword>
<keyword id="KW-1133">Transmembrane helix</keyword>
<keyword id="KW-0813">Transport</keyword>
<keyword id="KW-0830">Ubiquinone</keyword>
<geneLocation type="mitochondrion"/>
<evidence type="ECO:0000250" key="1"/>
<evidence type="ECO:0000250" key="2">
    <source>
        <dbReference type="UniProtKB" id="P00157"/>
    </source>
</evidence>
<evidence type="ECO:0000255" key="3">
    <source>
        <dbReference type="PROSITE-ProRule" id="PRU00967"/>
    </source>
</evidence>
<evidence type="ECO:0000255" key="4">
    <source>
        <dbReference type="PROSITE-ProRule" id="PRU00968"/>
    </source>
</evidence>
<proteinExistence type="inferred from homology"/>
<organism>
    <name type="scientific">Cnephaeus nilssonii</name>
    <name type="common">Northern bat</name>
    <name type="synonym">Eptesicus nilssonii</name>
    <dbReference type="NCBI Taxonomy" id="3371016"/>
    <lineage>
        <taxon>Eukaryota</taxon>
        <taxon>Metazoa</taxon>
        <taxon>Chordata</taxon>
        <taxon>Craniata</taxon>
        <taxon>Vertebrata</taxon>
        <taxon>Euteleostomi</taxon>
        <taxon>Mammalia</taxon>
        <taxon>Eutheria</taxon>
        <taxon>Laurasiatheria</taxon>
        <taxon>Chiroptera</taxon>
        <taxon>Yangochiroptera</taxon>
        <taxon>Vespertilionidae</taxon>
        <taxon>Cnephaeus</taxon>
    </lineage>
</organism>
<reference key="1">
    <citation type="journal article" date="2001" name="Mol. Phylogenet. Evol.">
        <title>Molecular systematics of bats of the genus Myotis (Vespertilionidae) suggests deterministic ecomorphological convergences.</title>
        <authorList>
            <person name="Ruedi M."/>
            <person name="Mayer F."/>
        </authorList>
    </citation>
    <scope>NUCLEOTIDE SEQUENCE [GENOMIC DNA]</scope>
    <source>
        <strain>Isolate ER 1300</strain>
    </source>
</reference>
<dbReference type="EMBL" id="AF376836">
    <property type="protein sequence ID" value="AAK57655.1"/>
    <property type="molecule type" value="Genomic_DNA"/>
</dbReference>
<dbReference type="GO" id="GO:0005743">
    <property type="term" value="C:mitochondrial inner membrane"/>
    <property type="evidence" value="ECO:0007669"/>
    <property type="project" value="UniProtKB-SubCell"/>
</dbReference>
<dbReference type="GO" id="GO:0045275">
    <property type="term" value="C:respiratory chain complex III"/>
    <property type="evidence" value="ECO:0007669"/>
    <property type="project" value="InterPro"/>
</dbReference>
<dbReference type="GO" id="GO:0046872">
    <property type="term" value="F:metal ion binding"/>
    <property type="evidence" value="ECO:0007669"/>
    <property type="project" value="UniProtKB-KW"/>
</dbReference>
<dbReference type="GO" id="GO:0008121">
    <property type="term" value="F:ubiquinol-cytochrome-c reductase activity"/>
    <property type="evidence" value="ECO:0007669"/>
    <property type="project" value="InterPro"/>
</dbReference>
<dbReference type="GO" id="GO:0006122">
    <property type="term" value="P:mitochondrial electron transport, ubiquinol to cytochrome c"/>
    <property type="evidence" value="ECO:0007669"/>
    <property type="project" value="TreeGrafter"/>
</dbReference>
<dbReference type="CDD" id="cd00290">
    <property type="entry name" value="cytochrome_b_C"/>
    <property type="match status" value="1"/>
</dbReference>
<dbReference type="CDD" id="cd00284">
    <property type="entry name" value="Cytochrome_b_N"/>
    <property type="match status" value="1"/>
</dbReference>
<dbReference type="FunFam" id="1.20.810.10:FF:000002">
    <property type="entry name" value="Cytochrome b"/>
    <property type="match status" value="1"/>
</dbReference>
<dbReference type="Gene3D" id="1.20.810.10">
    <property type="entry name" value="Cytochrome Bc1 Complex, Chain C"/>
    <property type="match status" value="1"/>
</dbReference>
<dbReference type="InterPro" id="IPR005798">
    <property type="entry name" value="Cyt_b/b6_C"/>
</dbReference>
<dbReference type="InterPro" id="IPR036150">
    <property type="entry name" value="Cyt_b/b6_C_sf"/>
</dbReference>
<dbReference type="InterPro" id="IPR005797">
    <property type="entry name" value="Cyt_b/b6_N"/>
</dbReference>
<dbReference type="InterPro" id="IPR027387">
    <property type="entry name" value="Cytb/b6-like_sf"/>
</dbReference>
<dbReference type="InterPro" id="IPR030689">
    <property type="entry name" value="Cytochrome_b"/>
</dbReference>
<dbReference type="InterPro" id="IPR048260">
    <property type="entry name" value="Cytochrome_b_C_euk/bac"/>
</dbReference>
<dbReference type="InterPro" id="IPR048259">
    <property type="entry name" value="Cytochrome_b_N_euk/bac"/>
</dbReference>
<dbReference type="InterPro" id="IPR016174">
    <property type="entry name" value="Di-haem_cyt_TM"/>
</dbReference>
<dbReference type="PANTHER" id="PTHR19271">
    <property type="entry name" value="CYTOCHROME B"/>
    <property type="match status" value="1"/>
</dbReference>
<dbReference type="PANTHER" id="PTHR19271:SF16">
    <property type="entry name" value="CYTOCHROME B"/>
    <property type="match status" value="1"/>
</dbReference>
<dbReference type="Pfam" id="PF00032">
    <property type="entry name" value="Cytochrom_B_C"/>
    <property type="match status" value="1"/>
</dbReference>
<dbReference type="Pfam" id="PF00033">
    <property type="entry name" value="Cytochrome_B"/>
    <property type="match status" value="1"/>
</dbReference>
<dbReference type="PIRSF" id="PIRSF038885">
    <property type="entry name" value="COB"/>
    <property type="match status" value="1"/>
</dbReference>
<dbReference type="SUPFAM" id="SSF81648">
    <property type="entry name" value="a domain/subunit of cytochrome bc1 complex (Ubiquinol-cytochrome c reductase)"/>
    <property type="match status" value="1"/>
</dbReference>
<dbReference type="SUPFAM" id="SSF81342">
    <property type="entry name" value="Transmembrane di-heme cytochromes"/>
    <property type="match status" value="1"/>
</dbReference>
<dbReference type="PROSITE" id="PS51003">
    <property type="entry name" value="CYTB_CTER"/>
    <property type="match status" value="1"/>
</dbReference>
<dbReference type="PROSITE" id="PS51002">
    <property type="entry name" value="CYTB_NTER"/>
    <property type="match status" value="1"/>
</dbReference>
<sequence>MTNIRKSHPLLKIVNDSFIDLPTPSSISAWWNFGSLLGICLALQILTGLFLAMHYTSDTATAFSSVTHICRDVNYGWVLRYLHANGASMFFICLYLHVGRGLYYGSYLYKETWNVGVILLFAVMATAFMGYVLPWGQMSFWGATVITNLLSAIPYIGTSLVEWIWGSFSVDKATLTRFFAFHFLLPFIISAMVMVHLLFLHETGSNNPTGIPSNADMIPFHPYYTIKDILGLFMMITALLALVXFAPDMLGDPDNYMPANPLSTPPHIKPEWYFLFAYAILRSIPNKLGGVLALVVSILILIIIPLLHTSKQRSMTFRPISQCLFWLLVADLLTLTWIGGQPVEYPYVIIGQLASVLYFSIIIVFMPLVGLMENHLLKW</sequence>
<name>CYB_CNENI</name>
<protein>
    <recommendedName>
        <fullName>Cytochrome b</fullName>
    </recommendedName>
    <alternativeName>
        <fullName>Complex III subunit 3</fullName>
    </alternativeName>
    <alternativeName>
        <fullName>Complex III subunit III</fullName>
    </alternativeName>
    <alternativeName>
        <fullName>Cytochrome b-c1 complex subunit 3</fullName>
    </alternativeName>
    <alternativeName>
        <fullName>Ubiquinol-cytochrome-c reductase complex cytochrome b subunit</fullName>
    </alternativeName>
</protein>
<comment type="function">
    <text evidence="2">Component of the ubiquinol-cytochrome c reductase complex (complex III or cytochrome b-c1 complex) that is part of the mitochondrial respiratory chain. The b-c1 complex mediates electron transfer from ubiquinol to cytochrome c. Contributes to the generation of a proton gradient across the mitochondrial membrane that is then used for ATP synthesis.</text>
</comment>
<comment type="cofactor">
    <cofactor evidence="2">
        <name>heme b</name>
        <dbReference type="ChEBI" id="CHEBI:60344"/>
    </cofactor>
    <text evidence="2">Binds 2 heme b groups non-covalently.</text>
</comment>
<comment type="subunit">
    <text evidence="2">The cytochrome bc1 complex contains 11 subunits: 3 respiratory subunits (MT-CYB, CYC1 and UQCRFS1), 2 core proteins (UQCRC1 and UQCRC2) and 6 low-molecular weight proteins (UQCRH/QCR6, UQCRB/QCR7, UQCRQ/QCR8, UQCR10/QCR9, UQCR11/QCR10 and a cleavage product of UQCRFS1). This cytochrome bc1 complex then forms a dimer.</text>
</comment>
<comment type="subcellular location">
    <subcellularLocation>
        <location evidence="2">Mitochondrion inner membrane</location>
        <topology evidence="2">Multi-pass membrane protein</topology>
    </subcellularLocation>
</comment>
<comment type="miscellaneous">
    <text evidence="1">Heme 1 (or BL or b562) is low-potential and absorbs at about 562 nm, and heme 2 (or BH or b566) is high-potential and absorbs at about 566 nm.</text>
</comment>
<comment type="similarity">
    <text evidence="3 4">Belongs to the cytochrome b family.</text>
</comment>
<comment type="caution">
    <text evidence="2">The full-length protein contains only eight transmembrane helices, not nine as predicted by bioinformatics tools.</text>
</comment>
<feature type="chain" id="PRO_0000060932" description="Cytochrome b">
    <location>
        <begin position="1"/>
        <end position="379"/>
    </location>
</feature>
<feature type="transmembrane region" description="Helical" evidence="2">
    <location>
        <begin position="33"/>
        <end position="53"/>
    </location>
</feature>
<feature type="transmembrane region" description="Helical" evidence="2">
    <location>
        <begin position="77"/>
        <end position="98"/>
    </location>
</feature>
<feature type="transmembrane region" description="Helical" evidence="2">
    <location>
        <begin position="113"/>
        <end position="133"/>
    </location>
</feature>
<feature type="transmembrane region" description="Helical" evidence="2">
    <location>
        <begin position="178"/>
        <end position="198"/>
    </location>
</feature>
<feature type="transmembrane region" description="Helical" evidence="2">
    <location>
        <begin position="226"/>
        <end position="246"/>
    </location>
</feature>
<feature type="transmembrane region" description="Helical" evidence="2">
    <location>
        <begin position="288"/>
        <end position="308"/>
    </location>
</feature>
<feature type="transmembrane region" description="Helical" evidence="2">
    <location>
        <begin position="320"/>
        <end position="340"/>
    </location>
</feature>
<feature type="transmembrane region" description="Helical" evidence="2">
    <location>
        <begin position="347"/>
        <end position="367"/>
    </location>
</feature>
<feature type="binding site" description="axial binding residue" evidence="2">
    <location>
        <position position="83"/>
    </location>
    <ligand>
        <name>heme b</name>
        <dbReference type="ChEBI" id="CHEBI:60344"/>
        <label>b562</label>
    </ligand>
    <ligandPart>
        <name>Fe</name>
        <dbReference type="ChEBI" id="CHEBI:18248"/>
    </ligandPart>
</feature>
<feature type="binding site" description="axial binding residue" evidence="2">
    <location>
        <position position="97"/>
    </location>
    <ligand>
        <name>heme b</name>
        <dbReference type="ChEBI" id="CHEBI:60344"/>
        <label>b566</label>
    </ligand>
    <ligandPart>
        <name>Fe</name>
        <dbReference type="ChEBI" id="CHEBI:18248"/>
    </ligandPart>
</feature>
<feature type="binding site" description="axial binding residue" evidence="2">
    <location>
        <position position="182"/>
    </location>
    <ligand>
        <name>heme b</name>
        <dbReference type="ChEBI" id="CHEBI:60344"/>
        <label>b562</label>
    </ligand>
    <ligandPart>
        <name>Fe</name>
        <dbReference type="ChEBI" id="CHEBI:18248"/>
    </ligandPart>
</feature>
<feature type="binding site" description="axial binding residue" evidence="2">
    <location>
        <position position="196"/>
    </location>
    <ligand>
        <name>heme b</name>
        <dbReference type="ChEBI" id="CHEBI:60344"/>
        <label>b566</label>
    </ligand>
    <ligandPart>
        <name>Fe</name>
        <dbReference type="ChEBI" id="CHEBI:18248"/>
    </ligandPart>
</feature>
<feature type="binding site" evidence="2">
    <location>
        <position position="201"/>
    </location>
    <ligand>
        <name>a ubiquinone</name>
        <dbReference type="ChEBI" id="CHEBI:16389"/>
    </ligand>
</feature>